<dbReference type="EC" id="2.1.1.214" evidence="1"/>
<dbReference type="EMBL" id="CR859531">
    <property type="protein sequence ID" value="CAH91698.1"/>
    <property type="molecule type" value="mRNA"/>
</dbReference>
<dbReference type="RefSeq" id="NP_001127452.1">
    <property type="nucleotide sequence ID" value="NM_001133980.1"/>
</dbReference>
<dbReference type="SMR" id="Q5R962"/>
<dbReference type="FunCoup" id="Q5R962">
    <property type="interactions" value="1179"/>
</dbReference>
<dbReference type="STRING" id="9601.ENSPPYP00000019024"/>
<dbReference type="GeneID" id="100174524"/>
<dbReference type="KEGG" id="pon:100174524"/>
<dbReference type="CTD" id="60487"/>
<dbReference type="eggNOG" id="KOG2671">
    <property type="taxonomic scope" value="Eukaryota"/>
</dbReference>
<dbReference type="InParanoid" id="Q5R962"/>
<dbReference type="OrthoDB" id="296065at2759"/>
<dbReference type="Proteomes" id="UP000001595">
    <property type="component" value="Unplaced"/>
</dbReference>
<dbReference type="GO" id="GO:0005737">
    <property type="term" value="C:cytoplasm"/>
    <property type="evidence" value="ECO:0000250"/>
    <property type="project" value="UniProtKB"/>
</dbReference>
<dbReference type="GO" id="GO:0043528">
    <property type="term" value="C:tRNA (m2G10) methyltransferase complex"/>
    <property type="evidence" value="ECO:0000250"/>
    <property type="project" value="UniProtKB"/>
</dbReference>
<dbReference type="GO" id="GO:0160102">
    <property type="term" value="F:tRNA (guanine(10)-N2)-methyltransferase activity"/>
    <property type="evidence" value="ECO:0000250"/>
    <property type="project" value="UniProtKB"/>
</dbReference>
<dbReference type="GO" id="GO:0000049">
    <property type="term" value="F:tRNA binding"/>
    <property type="evidence" value="ECO:0007669"/>
    <property type="project" value="UniProtKB-KW"/>
</dbReference>
<dbReference type="GO" id="GO:0032259">
    <property type="term" value="P:methylation"/>
    <property type="evidence" value="ECO:0007669"/>
    <property type="project" value="UniProtKB-KW"/>
</dbReference>
<dbReference type="GO" id="GO:0008033">
    <property type="term" value="P:tRNA processing"/>
    <property type="evidence" value="ECO:0007669"/>
    <property type="project" value="UniProtKB-KW"/>
</dbReference>
<dbReference type="CDD" id="cd02440">
    <property type="entry name" value="AdoMet_MTases"/>
    <property type="match status" value="1"/>
</dbReference>
<dbReference type="FunFam" id="3.40.50.150:FF:000069">
    <property type="entry name" value="tRNA (Guanine(10)-N2)-methyltransferase homolog isoform X2"/>
    <property type="match status" value="1"/>
</dbReference>
<dbReference type="Gene3D" id="3.40.50.150">
    <property type="entry name" value="Vaccinia Virus protein VP39"/>
    <property type="match status" value="1"/>
</dbReference>
<dbReference type="InterPro" id="IPR002052">
    <property type="entry name" value="DNA_methylase_N6_adenine_CS"/>
</dbReference>
<dbReference type="InterPro" id="IPR000241">
    <property type="entry name" value="RlmKL-like_Mtase"/>
</dbReference>
<dbReference type="InterPro" id="IPR029063">
    <property type="entry name" value="SAM-dependent_MTases_sf"/>
</dbReference>
<dbReference type="InterPro" id="IPR016691">
    <property type="entry name" value="tRNA_mtfrase_TRM11"/>
</dbReference>
<dbReference type="PANTHER" id="PTHR13370">
    <property type="entry name" value="RNA METHYLASE-RELATED"/>
    <property type="match status" value="1"/>
</dbReference>
<dbReference type="PANTHER" id="PTHR13370:SF3">
    <property type="entry name" value="TRNA (GUANINE(10)-N2)-METHYLTRANSFERASE HOMOLOG"/>
    <property type="match status" value="1"/>
</dbReference>
<dbReference type="Pfam" id="PF01170">
    <property type="entry name" value="UPF0020"/>
    <property type="match status" value="1"/>
</dbReference>
<dbReference type="PIRSF" id="PIRSF017259">
    <property type="entry name" value="tRNA_mtfrase_TRM11"/>
    <property type="match status" value="1"/>
</dbReference>
<dbReference type="PRINTS" id="PR00507">
    <property type="entry name" value="N12N6MTFRASE"/>
</dbReference>
<dbReference type="SUPFAM" id="SSF53335">
    <property type="entry name" value="S-adenosyl-L-methionine-dependent methyltransferases"/>
    <property type="match status" value="1"/>
</dbReference>
<dbReference type="PROSITE" id="PS00092">
    <property type="entry name" value="N6_MTASE"/>
    <property type="match status" value="1"/>
</dbReference>
<dbReference type="PROSITE" id="PS51627">
    <property type="entry name" value="SAM_MT_TRM11"/>
    <property type="match status" value="1"/>
</dbReference>
<name>TRM11_PONAB</name>
<proteinExistence type="evidence at transcript level"/>
<keyword id="KW-0007">Acetylation</keyword>
<keyword id="KW-0963">Cytoplasm</keyword>
<keyword id="KW-0489">Methyltransferase</keyword>
<keyword id="KW-1185">Reference proteome</keyword>
<keyword id="KW-0694">RNA-binding</keyword>
<keyword id="KW-0949">S-adenosyl-L-methionine</keyword>
<keyword id="KW-0808">Transferase</keyword>
<keyword id="KW-0819">tRNA processing</keyword>
<keyword id="KW-0820">tRNA-binding</keyword>
<feature type="initiator methionine" description="Removed" evidence="1">
    <location>
        <position position="1"/>
    </location>
</feature>
<feature type="chain" id="PRO_0000230290" description="tRNA (guanine(10)-N(2))-methyltransferase TRMT11">
    <location>
        <begin position="2"/>
        <end position="463"/>
    </location>
</feature>
<feature type="modified residue" description="N-acetylalanine" evidence="1">
    <location>
        <position position="2"/>
    </location>
</feature>
<sequence>MALSCTLNRYLLLMAQEHLEFRLPEIKSLLSLFGGQFGSSQETFGKSPFWILSIPSEDIARNLMKRTVCAKSIFELWGHGQSPEELYSSLKNYPVEKMVPFLHSDSTYKIKIHTFNKTLTQEEKIKRIDALEFLPFEGKVNLKKPQHVFSVLEDYGLDPNCIPENPHNIYFGRWIADGQRELIESYSVKKRHFIGNTSMDAGLSFIMANHGKVKENDIVFDPFVGTGGLLIACAHFGAYVYGTDIDYNTVHGLGKATRKNQKWRGPDENIRANLRQYGLEKYYLDVLVSDASKPSWRKGTYFDAIITDPPYGIRESTRRTGSQKEIPKGIEKWEKCPESHVPVSLSYHLSDMFLDLLNFAAETLVLGGRLVYWLPVYTPEYTEEMVPWHPCLELISNCEQKLSSHTSRRLITMEKVKKFENRDQYSHLLSDHFLPYQGHNSFREKYFSGVTKRIAKEEKSTQE</sequence>
<reference key="1">
    <citation type="submission" date="2004-11" db="EMBL/GenBank/DDBJ databases">
        <authorList>
            <consortium name="The German cDNA consortium"/>
        </authorList>
    </citation>
    <scope>NUCLEOTIDE SEQUENCE [LARGE SCALE MRNA]</scope>
    <source>
        <tissue>Brain cortex</tissue>
    </source>
</reference>
<evidence type="ECO:0000250" key="1">
    <source>
        <dbReference type="UniProtKB" id="Q7Z4G4"/>
    </source>
</evidence>
<evidence type="ECO:0000255" key="2">
    <source>
        <dbReference type="PROSITE-ProRule" id="PRU00959"/>
    </source>
</evidence>
<gene>
    <name evidence="1" type="primary">TRMT11</name>
</gene>
<accession>Q5R962</accession>
<comment type="function">
    <text evidence="1">Catalytic subunit of the TRMT11-TRM112 methyltransferase complex, that specifically mediates the S-adenosyl-L-methionine-dependent N(2)-methylation of guanosine nucleotide at position 10 (m2G10) in tRNAs. This is one of the major tRNA (guanine-N(2))-methyltransferases.</text>
</comment>
<comment type="catalytic activity">
    <reaction evidence="1">
        <text>guanosine(10) in tRNA + S-adenosyl-L-methionine = N(2)-methylguanosine(10) in tRNA + S-adenosyl-L-homocysteine + H(+)</text>
        <dbReference type="Rhea" id="RHEA:43128"/>
        <dbReference type="Rhea" id="RHEA-COMP:10355"/>
        <dbReference type="Rhea" id="RHEA-COMP:10357"/>
        <dbReference type="ChEBI" id="CHEBI:15378"/>
        <dbReference type="ChEBI" id="CHEBI:57856"/>
        <dbReference type="ChEBI" id="CHEBI:59789"/>
        <dbReference type="ChEBI" id="CHEBI:74269"/>
        <dbReference type="ChEBI" id="CHEBI:74481"/>
        <dbReference type="EC" id="2.1.1.214"/>
    </reaction>
    <physiologicalReaction direction="left-to-right" evidence="1">
        <dbReference type="Rhea" id="RHEA:43129"/>
    </physiologicalReaction>
</comment>
<comment type="subunit">
    <text evidence="1">Part of the heterodimeric TRMT11-TRM112 methyltransferase complex; this complex forms an active tRNA methyltransferase, where TRMT112 acts as an activator of the catalytic subunit TRMT11.</text>
</comment>
<comment type="subcellular location">
    <subcellularLocation>
        <location evidence="1">Cytoplasm</location>
    </subcellularLocation>
</comment>
<comment type="similarity">
    <text evidence="2">Belongs to the class I-like SAM-binding methyltransferase superfamily. TRM11 methyltransferase family.</text>
</comment>
<protein>
    <recommendedName>
        <fullName evidence="1">tRNA (guanine(10)-N(2))-methyltransferase TRMT11</fullName>
        <ecNumber evidence="1">2.1.1.214</ecNumber>
    </recommendedName>
    <alternativeName>
        <fullName evidence="1">tRNA methyltransferase 11 homolog</fullName>
    </alternativeName>
</protein>
<organism>
    <name type="scientific">Pongo abelii</name>
    <name type="common">Sumatran orangutan</name>
    <name type="synonym">Pongo pygmaeus abelii</name>
    <dbReference type="NCBI Taxonomy" id="9601"/>
    <lineage>
        <taxon>Eukaryota</taxon>
        <taxon>Metazoa</taxon>
        <taxon>Chordata</taxon>
        <taxon>Craniata</taxon>
        <taxon>Vertebrata</taxon>
        <taxon>Euteleostomi</taxon>
        <taxon>Mammalia</taxon>
        <taxon>Eutheria</taxon>
        <taxon>Euarchontoglires</taxon>
        <taxon>Primates</taxon>
        <taxon>Haplorrhini</taxon>
        <taxon>Catarrhini</taxon>
        <taxon>Hominidae</taxon>
        <taxon>Pongo</taxon>
    </lineage>
</organism>